<name>ARNC_SHESH</name>
<sequence>MKHNQNIDFVSIVIPVYNEEASLPELLSRTLAAADSMGKHYELVLIDDGSRDNSANIIEAAAAEPDSHVVGIILNRNYGQHNAIMAGFEHVRGDLIITLDADLQNPPEEIPNLVAKAEEGYDSVGTVRRHRQDSALRRYPSKLINKLVKRSTGVEMNDYGCMLRAYRRHVVKAMLECHERSTFIPILANGFARHTAEIDVHHSERSQGESKYGFMNLINLMFDLLTSMTTAPLRMLSIVGGGIASFGILFGLFLILLRLIYGAEWGVDGVFPLFSILFIFIGAQFVGLGLLGEYIGRIYSDVRARPRYYVQDILVGEATKGARISDENKNN</sequence>
<keyword id="KW-0046">Antibiotic resistance</keyword>
<keyword id="KW-0997">Cell inner membrane</keyword>
<keyword id="KW-1003">Cell membrane</keyword>
<keyword id="KW-0328">Glycosyltransferase</keyword>
<keyword id="KW-0441">Lipid A biosynthesis</keyword>
<keyword id="KW-0444">Lipid biosynthesis</keyword>
<keyword id="KW-0443">Lipid metabolism</keyword>
<keyword id="KW-0448">Lipopolysaccharide biosynthesis</keyword>
<keyword id="KW-0472">Membrane</keyword>
<keyword id="KW-1185">Reference proteome</keyword>
<keyword id="KW-0808">Transferase</keyword>
<keyword id="KW-0812">Transmembrane</keyword>
<keyword id="KW-1133">Transmembrane helix</keyword>
<gene>
    <name evidence="1" type="primary">arnC</name>
    <name type="ordered locus">Ssed_0925</name>
</gene>
<feature type="chain" id="PRO_0000380272" description="Undecaprenyl-phosphate 4-deoxy-4-formamido-L-arabinose transferase">
    <location>
        <begin position="1"/>
        <end position="331"/>
    </location>
</feature>
<feature type="transmembrane region" description="Helical" evidence="1">
    <location>
        <begin position="236"/>
        <end position="256"/>
    </location>
</feature>
<feature type="transmembrane region" description="Helical" evidence="1">
    <location>
        <begin position="270"/>
        <end position="290"/>
    </location>
</feature>
<accession>A8FRR3</accession>
<organism>
    <name type="scientific">Shewanella sediminis (strain HAW-EB3)</name>
    <dbReference type="NCBI Taxonomy" id="425104"/>
    <lineage>
        <taxon>Bacteria</taxon>
        <taxon>Pseudomonadati</taxon>
        <taxon>Pseudomonadota</taxon>
        <taxon>Gammaproteobacteria</taxon>
        <taxon>Alteromonadales</taxon>
        <taxon>Shewanellaceae</taxon>
        <taxon>Shewanella</taxon>
    </lineage>
</organism>
<proteinExistence type="inferred from homology"/>
<comment type="function">
    <text evidence="1">Catalyzes the transfer of 4-deoxy-4-formamido-L-arabinose from UDP to undecaprenyl phosphate. The modified arabinose is attached to lipid A and is required for resistance to polymyxin and cationic antimicrobial peptides.</text>
</comment>
<comment type="catalytic activity">
    <reaction evidence="1">
        <text>UDP-4-deoxy-4-formamido-beta-L-arabinose + di-trans,octa-cis-undecaprenyl phosphate = 4-deoxy-4-formamido-alpha-L-arabinopyranosyl di-trans,octa-cis-undecaprenyl phosphate + UDP</text>
        <dbReference type="Rhea" id="RHEA:27722"/>
        <dbReference type="ChEBI" id="CHEBI:58223"/>
        <dbReference type="ChEBI" id="CHEBI:58709"/>
        <dbReference type="ChEBI" id="CHEBI:58909"/>
        <dbReference type="ChEBI" id="CHEBI:60392"/>
        <dbReference type="EC" id="2.4.2.53"/>
    </reaction>
</comment>
<comment type="pathway">
    <text evidence="1">Glycolipid biosynthesis; 4-amino-4-deoxy-alpha-L-arabinose undecaprenyl phosphate biosynthesis; 4-amino-4-deoxy-alpha-L-arabinose undecaprenyl phosphate from UDP-4-deoxy-4-formamido-beta-L-arabinose and undecaprenyl phosphate: step 1/2.</text>
</comment>
<comment type="pathway">
    <text evidence="1">Bacterial outer membrane biogenesis; lipopolysaccharide biosynthesis.</text>
</comment>
<comment type="subcellular location">
    <subcellularLocation>
        <location evidence="1">Cell inner membrane</location>
        <topology evidence="1">Multi-pass membrane protein</topology>
    </subcellularLocation>
</comment>
<comment type="similarity">
    <text evidence="1">Belongs to the glycosyltransferase 2 family.</text>
</comment>
<protein>
    <recommendedName>
        <fullName evidence="1">Undecaprenyl-phosphate 4-deoxy-4-formamido-L-arabinose transferase</fullName>
        <ecNumber evidence="1">2.4.2.53</ecNumber>
    </recommendedName>
    <alternativeName>
        <fullName evidence="1">Undecaprenyl-phosphate Ara4FN transferase</fullName>
        <shortName evidence="1">Ara4FN transferase</shortName>
    </alternativeName>
</protein>
<reference key="1">
    <citation type="submission" date="2007-08" db="EMBL/GenBank/DDBJ databases">
        <title>Complete sequence of Shewanella sediminis HAW-EB3.</title>
        <authorList>
            <consortium name="US DOE Joint Genome Institute"/>
            <person name="Copeland A."/>
            <person name="Lucas S."/>
            <person name="Lapidus A."/>
            <person name="Barry K."/>
            <person name="Glavina del Rio T."/>
            <person name="Dalin E."/>
            <person name="Tice H."/>
            <person name="Pitluck S."/>
            <person name="Chertkov O."/>
            <person name="Brettin T."/>
            <person name="Bruce D."/>
            <person name="Detter J.C."/>
            <person name="Han C."/>
            <person name="Schmutz J."/>
            <person name="Larimer F."/>
            <person name="Land M."/>
            <person name="Hauser L."/>
            <person name="Kyrpides N."/>
            <person name="Kim E."/>
            <person name="Zhao J.-S."/>
            <person name="Richardson P."/>
        </authorList>
    </citation>
    <scope>NUCLEOTIDE SEQUENCE [LARGE SCALE GENOMIC DNA]</scope>
    <source>
        <strain>HAW-EB3</strain>
    </source>
</reference>
<dbReference type="EC" id="2.4.2.53" evidence="1"/>
<dbReference type="EMBL" id="CP000821">
    <property type="protein sequence ID" value="ABV35536.1"/>
    <property type="molecule type" value="Genomic_DNA"/>
</dbReference>
<dbReference type="RefSeq" id="WP_012141272.1">
    <property type="nucleotide sequence ID" value="NC_009831.1"/>
</dbReference>
<dbReference type="SMR" id="A8FRR3"/>
<dbReference type="STRING" id="425104.Ssed_0925"/>
<dbReference type="CAZy" id="GT2">
    <property type="family name" value="Glycosyltransferase Family 2"/>
</dbReference>
<dbReference type="KEGG" id="sse:Ssed_0925"/>
<dbReference type="eggNOG" id="COG0463">
    <property type="taxonomic scope" value="Bacteria"/>
</dbReference>
<dbReference type="HOGENOM" id="CLU_033536_0_0_6"/>
<dbReference type="OrthoDB" id="9811884at2"/>
<dbReference type="UniPathway" id="UPA00030"/>
<dbReference type="UniPathway" id="UPA00036">
    <property type="reaction ID" value="UER00495"/>
</dbReference>
<dbReference type="Proteomes" id="UP000002015">
    <property type="component" value="Chromosome"/>
</dbReference>
<dbReference type="GO" id="GO:0005886">
    <property type="term" value="C:plasma membrane"/>
    <property type="evidence" value="ECO:0007669"/>
    <property type="project" value="UniProtKB-SubCell"/>
</dbReference>
<dbReference type="GO" id="GO:0016780">
    <property type="term" value="F:phosphotransferase activity, for other substituted phosphate groups"/>
    <property type="evidence" value="ECO:0007669"/>
    <property type="project" value="UniProtKB-UniRule"/>
</dbReference>
<dbReference type="GO" id="GO:0099621">
    <property type="term" value="F:undecaprenyl-phosphate 4-deoxy-4-formamido-L-arabinose transferase activity"/>
    <property type="evidence" value="ECO:0007669"/>
    <property type="project" value="UniProtKB-EC"/>
</dbReference>
<dbReference type="GO" id="GO:0036108">
    <property type="term" value="P:4-amino-4-deoxy-alpha-L-arabinopyranosyl undecaprenyl phosphate biosynthetic process"/>
    <property type="evidence" value="ECO:0007669"/>
    <property type="project" value="UniProtKB-UniRule"/>
</dbReference>
<dbReference type="GO" id="GO:0009245">
    <property type="term" value="P:lipid A biosynthetic process"/>
    <property type="evidence" value="ECO:0007669"/>
    <property type="project" value="UniProtKB-UniRule"/>
</dbReference>
<dbReference type="GO" id="GO:0009103">
    <property type="term" value="P:lipopolysaccharide biosynthetic process"/>
    <property type="evidence" value="ECO:0007669"/>
    <property type="project" value="UniProtKB-UniRule"/>
</dbReference>
<dbReference type="GO" id="GO:0046677">
    <property type="term" value="P:response to antibiotic"/>
    <property type="evidence" value="ECO:0007669"/>
    <property type="project" value="UniProtKB-KW"/>
</dbReference>
<dbReference type="CDD" id="cd04187">
    <property type="entry name" value="DPM1_like_bac"/>
    <property type="match status" value="1"/>
</dbReference>
<dbReference type="Gene3D" id="3.90.550.10">
    <property type="entry name" value="Spore Coat Polysaccharide Biosynthesis Protein SpsA, Chain A"/>
    <property type="match status" value="1"/>
</dbReference>
<dbReference type="HAMAP" id="MF_01164">
    <property type="entry name" value="ArnC_transfer"/>
    <property type="match status" value="1"/>
</dbReference>
<dbReference type="InterPro" id="IPR022857">
    <property type="entry name" value="ArnC_tfrase"/>
</dbReference>
<dbReference type="InterPro" id="IPR001173">
    <property type="entry name" value="Glyco_trans_2-like"/>
</dbReference>
<dbReference type="InterPro" id="IPR050256">
    <property type="entry name" value="Glycosyltransferase_2"/>
</dbReference>
<dbReference type="InterPro" id="IPR029044">
    <property type="entry name" value="Nucleotide-diphossugar_trans"/>
</dbReference>
<dbReference type="NCBIfam" id="NF007986">
    <property type="entry name" value="PRK10714.1"/>
    <property type="match status" value="1"/>
</dbReference>
<dbReference type="PANTHER" id="PTHR48090:SF3">
    <property type="entry name" value="UNDECAPRENYL-PHOSPHATE 4-DEOXY-4-FORMAMIDO-L-ARABINOSE TRANSFERASE"/>
    <property type="match status" value="1"/>
</dbReference>
<dbReference type="PANTHER" id="PTHR48090">
    <property type="entry name" value="UNDECAPRENYL-PHOSPHATE 4-DEOXY-4-FORMAMIDO-L-ARABINOSE TRANSFERASE-RELATED"/>
    <property type="match status" value="1"/>
</dbReference>
<dbReference type="Pfam" id="PF00535">
    <property type="entry name" value="Glycos_transf_2"/>
    <property type="match status" value="1"/>
</dbReference>
<dbReference type="SUPFAM" id="SSF53448">
    <property type="entry name" value="Nucleotide-diphospho-sugar transferases"/>
    <property type="match status" value="1"/>
</dbReference>
<evidence type="ECO:0000255" key="1">
    <source>
        <dbReference type="HAMAP-Rule" id="MF_01164"/>
    </source>
</evidence>